<name>PSBC_LEPVR</name>
<gene>
    <name evidence="2" type="primary">psbC</name>
</gene>
<protein>
    <recommendedName>
        <fullName evidence="2">Photosystem II CP43 reaction center protein</fullName>
    </recommendedName>
    <alternativeName>
        <fullName evidence="2">PSII 43 kDa protein</fullName>
    </alternativeName>
    <alternativeName>
        <fullName evidence="2">Protein CP-43</fullName>
    </alternativeName>
</protein>
<feature type="propeptide" id="PRO_0000431158" evidence="2">
    <location>
        <begin position="1"/>
        <end position="14"/>
    </location>
</feature>
<feature type="chain" id="PRO_0000361408" description="Photosystem II CP43 reaction center protein" evidence="2">
    <location>
        <begin position="15"/>
        <end position="473"/>
    </location>
</feature>
<feature type="transmembrane region" description="Helical" evidence="2">
    <location>
        <begin position="69"/>
        <end position="93"/>
    </location>
</feature>
<feature type="transmembrane region" description="Helical" evidence="2">
    <location>
        <begin position="134"/>
        <end position="155"/>
    </location>
</feature>
<feature type="transmembrane region" description="Helical" evidence="2">
    <location>
        <begin position="178"/>
        <end position="200"/>
    </location>
</feature>
<feature type="transmembrane region" description="Helical" evidence="2">
    <location>
        <begin position="255"/>
        <end position="275"/>
    </location>
</feature>
<feature type="transmembrane region" description="Helical" evidence="2">
    <location>
        <begin position="291"/>
        <end position="312"/>
    </location>
</feature>
<feature type="transmembrane region" description="Helical" evidence="2">
    <location>
        <begin position="447"/>
        <end position="471"/>
    </location>
</feature>
<feature type="binding site" evidence="2">
    <location>
        <position position="367"/>
    </location>
    <ligand>
        <name>[CaMn4O5] cluster</name>
        <dbReference type="ChEBI" id="CHEBI:189552"/>
    </ligand>
</feature>
<feature type="modified residue" description="N-acetylthreonine" evidence="1 2">
    <location>
        <position position="15"/>
    </location>
</feature>
<feature type="modified residue" description="Phosphothreonine" evidence="1 2">
    <location>
        <position position="15"/>
    </location>
</feature>
<dbReference type="EMBL" id="AP009374">
    <property type="protein sequence ID" value="BAF50457.1"/>
    <property type="molecule type" value="Genomic_DNA"/>
</dbReference>
<dbReference type="RefSeq" id="YP_001123633.1">
    <property type="nucleotide sequence ID" value="NC_009273.1"/>
</dbReference>
<dbReference type="SMR" id="A4QLA2"/>
<dbReference type="GeneID" id="4961964"/>
<dbReference type="GO" id="GO:0009535">
    <property type="term" value="C:chloroplast thylakoid membrane"/>
    <property type="evidence" value="ECO:0007669"/>
    <property type="project" value="UniProtKB-SubCell"/>
</dbReference>
<dbReference type="GO" id="GO:0009523">
    <property type="term" value="C:photosystem II"/>
    <property type="evidence" value="ECO:0007669"/>
    <property type="project" value="UniProtKB-KW"/>
</dbReference>
<dbReference type="GO" id="GO:0016168">
    <property type="term" value="F:chlorophyll binding"/>
    <property type="evidence" value="ECO:0007669"/>
    <property type="project" value="UniProtKB-UniRule"/>
</dbReference>
<dbReference type="GO" id="GO:0045156">
    <property type="term" value="F:electron transporter, transferring electrons within the cyclic electron transport pathway of photosynthesis activity"/>
    <property type="evidence" value="ECO:0007669"/>
    <property type="project" value="InterPro"/>
</dbReference>
<dbReference type="GO" id="GO:0046872">
    <property type="term" value="F:metal ion binding"/>
    <property type="evidence" value="ECO:0007669"/>
    <property type="project" value="UniProtKB-KW"/>
</dbReference>
<dbReference type="GO" id="GO:0009772">
    <property type="term" value="P:photosynthetic electron transport in photosystem II"/>
    <property type="evidence" value="ECO:0007669"/>
    <property type="project" value="InterPro"/>
</dbReference>
<dbReference type="FunFam" id="1.10.10.670:FF:000001">
    <property type="entry name" value="Photosystem II CP43 reaction center protein"/>
    <property type="match status" value="1"/>
</dbReference>
<dbReference type="Gene3D" id="1.10.10.670">
    <property type="entry name" value="photosystem ii from thermosynechococcus elongatus"/>
    <property type="match status" value="1"/>
</dbReference>
<dbReference type="HAMAP" id="MF_01496">
    <property type="entry name" value="PSII_PsbC_CP43"/>
    <property type="match status" value="1"/>
</dbReference>
<dbReference type="InterPro" id="IPR000932">
    <property type="entry name" value="PS_antenna-like"/>
</dbReference>
<dbReference type="InterPro" id="IPR036001">
    <property type="entry name" value="PS_II_antenna-like_sf"/>
</dbReference>
<dbReference type="InterPro" id="IPR005869">
    <property type="entry name" value="PSII_PsbC"/>
</dbReference>
<dbReference type="InterPro" id="IPR044900">
    <property type="entry name" value="PSII_PsbC_sf"/>
</dbReference>
<dbReference type="NCBIfam" id="TIGR01153">
    <property type="entry name" value="psbC"/>
    <property type="match status" value="1"/>
</dbReference>
<dbReference type="Pfam" id="PF00421">
    <property type="entry name" value="PSII"/>
    <property type="match status" value="1"/>
</dbReference>
<dbReference type="SUPFAM" id="SSF161077">
    <property type="entry name" value="Photosystem II antenna protein-like"/>
    <property type="match status" value="1"/>
</dbReference>
<keyword id="KW-0007">Acetylation</keyword>
<keyword id="KW-0148">Chlorophyll</keyword>
<keyword id="KW-0150">Chloroplast</keyword>
<keyword id="KW-0157">Chromophore</keyword>
<keyword id="KW-0464">Manganese</keyword>
<keyword id="KW-0472">Membrane</keyword>
<keyword id="KW-0479">Metal-binding</keyword>
<keyword id="KW-0597">Phosphoprotein</keyword>
<keyword id="KW-0602">Photosynthesis</keyword>
<keyword id="KW-0604">Photosystem II</keyword>
<keyword id="KW-0934">Plastid</keyword>
<keyword id="KW-0793">Thylakoid</keyword>
<keyword id="KW-0812">Transmembrane</keyword>
<keyword id="KW-1133">Transmembrane helix</keyword>
<accession>A4QLA2</accession>
<evidence type="ECO:0000250" key="1">
    <source>
        <dbReference type="UniProtKB" id="P56778"/>
    </source>
</evidence>
<evidence type="ECO:0000255" key="2">
    <source>
        <dbReference type="HAMAP-Rule" id="MF_01496"/>
    </source>
</evidence>
<geneLocation type="chloroplast"/>
<sequence length="473" mass="51854">MKTLYSLRRFYHVETLFNGTLALAGRDQETTGFAWWAGNARLINLSGKLLGAHVAHAGLIVFWAGAMNLFEVAHFVPEKPMYEQGLILLPHLATLGWGVGPGGEVIDTFPYFVSGVLHVISSAVLGFGGIYHALLGPETLEESFPFFGYVWKDRNKMTTILGIHLILLGVGAFLLVFKALYFGGVYDTWAPGGGDVRKITNLTLSPSVIFGYLLKSPFGGEGWIVSVDDLEDIIGGHVWLGSICIFGGIWHILTKPFAWARRALVWSGEAYLSYSLAALSVCGFIACCFVWFNNTAYPSEFYGPTGPEASQAQAFTFLVRDQRLGANVGSAQGPTGLGKYLMRSPTGEVIFGGETMRFWDLRAPWLEPLRGPNGLDLSRLKKDIQPWQERRSAEYMTHAPLGSLNSVGGVATEINAVNYVSPRSWLSTSHFVLGFFLFVGHLWHAGRARAAAAGFEKGIDRDFEPVLSMTPLN</sequence>
<organism>
    <name type="scientific">Lepidium virginicum</name>
    <name type="common">Virginia pepperweed</name>
    <dbReference type="NCBI Taxonomy" id="59292"/>
    <lineage>
        <taxon>Eukaryota</taxon>
        <taxon>Viridiplantae</taxon>
        <taxon>Streptophyta</taxon>
        <taxon>Embryophyta</taxon>
        <taxon>Tracheophyta</taxon>
        <taxon>Spermatophyta</taxon>
        <taxon>Magnoliopsida</taxon>
        <taxon>eudicotyledons</taxon>
        <taxon>Gunneridae</taxon>
        <taxon>Pentapetalae</taxon>
        <taxon>rosids</taxon>
        <taxon>malvids</taxon>
        <taxon>Brassicales</taxon>
        <taxon>Brassicaceae</taxon>
        <taxon>Lepidieae</taxon>
        <taxon>Lepidium</taxon>
    </lineage>
</organism>
<proteinExistence type="inferred from homology"/>
<reference key="1">
    <citation type="submission" date="2007-03" db="EMBL/GenBank/DDBJ databases">
        <title>Sequencing analysis of Lepidium virginicum JO26 chloroplast DNA.</title>
        <authorList>
            <person name="Hosouchi T."/>
            <person name="Tsuruoka H."/>
            <person name="Kotani H."/>
        </authorList>
    </citation>
    <scope>NUCLEOTIDE SEQUENCE [LARGE SCALE GENOMIC DNA]</scope>
</reference>
<comment type="function">
    <text evidence="2">One of the components of the core complex of photosystem II (PSII). It binds chlorophyll and helps catalyze the primary light-induced photochemical processes of PSII. PSII is a light-driven water:plastoquinone oxidoreductase, using light energy to abstract electrons from H(2)O, generating O(2) and a proton gradient subsequently used for ATP formation.</text>
</comment>
<comment type="cofactor">
    <text evidence="2">Binds multiple chlorophylls and provides some of the ligands for the Ca-4Mn-5O cluster of the oxygen-evolving complex. It may also provide a ligand for a Cl- that is required for oxygen evolution. PSII binds additional chlorophylls, carotenoids and specific lipids.</text>
</comment>
<comment type="subunit">
    <text evidence="2">PSII is composed of 1 copy each of membrane proteins PsbA, PsbB, PsbC, PsbD, PsbE, PsbF, PsbH, PsbI, PsbJ, PsbK, PsbL, PsbM, PsbT, PsbX, PsbY, PsbZ, Psb30/Ycf12, at least 3 peripheral proteins of the oxygen-evolving complex and a large number of cofactors. It forms dimeric complexes.</text>
</comment>
<comment type="subcellular location">
    <subcellularLocation>
        <location evidence="2">Plastid</location>
        <location evidence="2">Chloroplast thylakoid membrane</location>
        <topology evidence="2">Multi-pass membrane protein</topology>
    </subcellularLocation>
</comment>
<comment type="similarity">
    <text evidence="2">Belongs to the PsbB/PsbC family. PsbC subfamily.</text>
</comment>